<feature type="chain" id="PRO_0000394127" description="Telomere repeat-binding protein 4">
    <location>
        <begin position="1"/>
        <end position="640"/>
    </location>
</feature>
<feature type="domain" description="Ubiquitin-like" evidence="1">
    <location>
        <begin position="343"/>
        <end position="422"/>
    </location>
</feature>
<feature type="domain" description="HTH myb-type" evidence="2">
    <location>
        <begin position="530"/>
        <end position="589"/>
    </location>
</feature>
<feature type="DNA-binding region" description="H-T-H motif" evidence="2">
    <location>
        <begin position="558"/>
        <end position="585"/>
    </location>
</feature>
<feature type="region of interest" description="Disordered" evidence="3">
    <location>
        <begin position="442"/>
        <end position="464"/>
    </location>
</feature>
<feature type="mutagenesis site" description="60% decrease in telomere binding." evidence="8">
    <original>R</original>
    <variation>G</variation>
    <location>
        <position position="607"/>
    </location>
</feature>
<feature type="mutagenesis site" description="80% decrease in telomere binding." evidence="8">
    <original>R</original>
    <variation>I</variation>
    <location>
        <position position="607"/>
    </location>
</feature>
<feature type="sequence conflict" description="In Ref. 5; BAE99080." evidence="10" ref="5">
    <original>V</original>
    <variation>L</variation>
    <location>
        <position position="372"/>
    </location>
</feature>
<feature type="sequence conflict" description="In Ref. 2; AAC24592." evidence="10" ref="2">
    <original>G</original>
    <variation>R</variation>
    <location>
        <position position="383"/>
    </location>
</feature>
<feature type="sequence conflict" description="In Ref. 2; AAC24592." evidence="10" ref="2">
    <original>P</original>
    <variation>H</variation>
    <location>
        <position position="465"/>
    </location>
</feature>
<feature type="sequence conflict" description="In Ref. 2; AAC24592." evidence="10" ref="2">
    <original>S</original>
    <variation>P</variation>
    <location>
        <position position="501"/>
    </location>
</feature>
<dbReference type="EMBL" id="AY029195">
    <property type="protein sequence ID" value="AAK31590.1"/>
    <property type="molecule type" value="mRNA"/>
</dbReference>
<dbReference type="EMBL" id="AF072536">
    <property type="protein sequence ID" value="AAC24592.1"/>
    <property type="molecule type" value="mRNA"/>
</dbReference>
<dbReference type="EMBL" id="AB005230">
    <property type="protein sequence ID" value="BAB11110.1"/>
    <property type="molecule type" value="Genomic_DNA"/>
</dbReference>
<dbReference type="EMBL" id="CP002688">
    <property type="protein sequence ID" value="AED91945.1"/>
    <property type="molecule type" value="Genomic_DNA"/>
</dbReference>
<dbReference type="EMBL" id="CP002688">
    <property type="protein sequence ID" value="ANM68452.1"/>
    <property type="molecule type" value="Genomic_DNA"/>
</dbReference>
<dbReference type="EMBL" id="AK227016">
    <property type="protein sequence ID" value="BAE99080.1"/>
    <property type="molecule type" value="mRNA"/>
</dbReference>
<dbReference type="EMBL" id="BT046176">
    <property type="protein sequence ID" value="ACI49775.1"/>
    <property type="molecule type" value="mRNA"/>
</dbReference>
<dbReference type="PIR" id="T51231">
    <property type="entry name" value="T51231"/>
</dbReference>
<dbReference type="RefSeq" id="NP_001330208.1">
    <property type="nucleotide sequence ID" value="NM_001343296.1"/>
</dbReference>
<dbReference type="RefSeq" id="NP_196886.1">
    <property type="nucleotide sequence ID" value="NM_121385.5"/>
</dbReference>
<dbReference type="SMR" id="Q9FFY9"/>
<dbReference type="BioGRID" id="16505">
    <property type="interactions" value="2"/>
</dbReference>
<dbReference type="FunCoup" id="Q9FFY9">
    <property type="interactions" value="156"/>
</dbReference>
<dbReference type="IntAct" id="Q9FFY9">
    <property type="interactions" value="1"/>
</dbReference>
<dbReference type="STRING" id="3702.Q9FFY9"/>
<dbReference type="iPTMnet" id="Q9FFY9"/>
<dbReference type="PaxDb" id="3702-AT5G13820.1"/>
<dbReference type="ProteomicsDB" id="232382"/>
<dbReference type="EnsemblPlants" id="AT5G13820.1">
    <property type="protein sequence ID" value="AT5G13820.1"/>
    <property type="gene ID" value="AT5G13820"/>
</dbReference>
<dbReference type="EnsemblPlants" id="AT5G13820.2">
    <property type="protein sequence ID" value="AT5G13820.2"/>
    <property type="gene ID" value="AT5G13820"/>
</dbReference>
<dbReference type="GeneID" id="831227"/>
<dbReference type="Gramene" id="AT5G13820.1">
    <property type="protein sequence ID" value="AT5G13820.1"/>
    <property type="gene ID" value="AT5G13820"/>
</dbReference>
<dbReference type="Gramene" id="AT5G13820.2">
    <property type="protein sequence ID" value="AT5G13820.2"/>
    <property type="gene ID" value="AT5G13820"/>
</dbReference>
<dbReference type="KEGG" id="ath:AT5G13820"/>
<dbReference type="Araport" id="AT5G13820"/>
<dbReference type="TAIR" id="AT5G13820">
    <property type="gene designation" value="TBP1"/>
</dbReference>
<dbReference type="eggNOG" id="ENOG502QPSZ">
    <property type="taxonomic scope" value="Eukaryota"/>
</dbReference>
<dbReference type="HOGENOM" id="CLU_020710_2_0_1"/>
<dbReference type="InParanoid" id="Q9FFY9"/>
<dbReference type="OMA" id="QQGKHHA"/>
<dbReference type="PhylomeDB" id="Q9FFY9"/>
<dbReference type="PRO" id="PR:Q9FFY9"/>
<dbReference type="Proteomes" id="UP000006548">
    <property type="component" value="Chromosome 5"/>
</dbReference>
<dbReference type="ExpressionAtlas" id="Q9FFY9">
    <property type="expression patterns" value="baseline and differential"/>
</dbReference>
<dbReference type="GO" id="GO:0000781">
    <property type="term" value="C:chromosome, telomeric region"/>
    <property type="evidence" value="ECO:0000314"/>
    <property type="project" value="TAIR"/>
</dbReference>
<dbReference type="GO" id="GO:0005634">
    <property type="term" value="C:nucleus"/>
    <property type="evidence" value="ECO:0007669"/>
    <property type="project" value="UniProtKB-SubCell"/>
</dbReference>
<dbReference type="GO" id="GO:0003677">
    <property type="term" value="F:DNA binding"/>
    <property type="evidence" value="ECO:0000314"/>
    <property type="project" value="TAIR"/>
</dbReference>
<dbReference type="GO" id="GO:0003691">
    <property type="term" value="F:double-stranded telomeric DNA binding"/>
    <property type="evidence" value="ECO:0000314"/>
    <property type="project" value="TAIR"/>
</dbReference>
<dbReference type="GO" id="GO:0042162">
    <property type="term" value="F:telomeric DNA binding"/>
    <property type="evidence" value="ECO:0000314"/>
    <property type="project" value="TAIR"/>
</dbReference>
<dbReference type="GO" id="GO:0000723">
    <property type="term" value="P:telomere maintenance"/>
    <property type="evidence" value="ECO:0000304"/>
    <property type="project" value="TAIR"/>
</dbReference>
<dbReference type="CDD" id="cd11660">
    <property type="entry name" value="SANT_TRF"/>
    <property type="match status" value="1"/>
</dbReference>
<dbReference type="FunFam" id="1.10.246.220:FF:000001">
    <property type="entry name" value="Telomere repeat-binding protein 1"/>
    <property type="match status" value="1"/>
</dbReference>
<dbReference type="Gene3D" id="1.10.246.220">
    <property type="match status" value="1"/>
</dbReference>
<dbReference type="InterPro" id="IPR009057">
    <property type="entry name" value="Homeodomain-like_sf"/>
</dbReference>
<dbReference type="InterPro" id="IPR017930">
    <property type="entry name" value="Myb_dom"/>
</dbReference>
<dbReference type="InterPro" id="IPR001005">
    <property type="entry name" value="SANT/Myb"/>
</dbReference>
<dbReference type="InterPro" id="IPR031105">
    <property type="entry name" value="TRP_plant"/>
</dbReference>
<dbReference type="InterPro" id="IPR000626">
    <property type="entry name" value="Ubiquitin-like_dom"/>
</dbReference>
<dbReference type="PANTHER" id="PTHR21717:SF64">
    <property type="entry name" value="TELOMERE REPEAT-BINDING PROTEIN 4"/>
    <property type="match status" value="1"/>
</dbReference>
<dbReference type="PANTHER" id="PTHR21717">
    <property type="entry name" value="TELOMERIC REPEAT BINDING PROTEIN"/>
    <property type="match status" value="1"/>
</dbReference>
<dbReference type="Pfam" id="PF23603">
    <property type="entry name" value="Ubiquitin_TPR1"/>
    <property type="match status" value="1"/>
</dbReference>
<dbReference type="SMART" id="SM00717">
    <property type="entry name" value="SANT"/>
    <property type="match status" value="1"/>
</dbReference>
<dbReference type="SUPFAM" id="SSF46689">
    <property type="entry name" value="Homeodomain-like"/>
    <property type="match status" value="1"/>
</dbReference>
<dbReference type="PROSITE" id="PS51294">
    <property type="entry name" value="HTH_MYB"/>
    <property type="match status" value="1"/>
</dbReference>
<dbReference type="PROSITE" id="PS50053">
    <property type="entry name" value="UBIQUITIN_2"/>
    <property type="match status" value="1"/>
</dbReference>
<name>TRP4_ARATH</name>
<comment type="function">
    <text evidence="4 8">Binds specifically to the plant telomeric double-stranded DNA sequences 5'-TTTAGGG-3'. At least 2 repeats of telomeric sequences are required for binding. Induces DNA bending.</text>
</comment>
<comment type="subunit">
    <text evidence="4 5 9">Homomultimer. Interacts with SNL1 (via PAH2). Interacts with STO.</text>
</comment>
<comment type="interaction">
    <interactant intactId="EBI-2616485">
        <id>Q9FFY9</id>
    </interactant>
    <interactant intactId="EBI-2616294">
        <id>Q9SRH9</id>
        <label>SNL1</label>
    </interactant>
    <organismsDiffer>false</organismsDiffer>
    <experiments>2</experiments>
</comment>
<comment type="subcellular location">
    <subcellularLocation>
        <location evidence="2 5 8">Nucleus</location>
    </subcellularLocation>
</comment>
<comment type="tissue specificity">
    <text evidence="4 6 7">Expressed ubiquitously. Highest expression in flowers and roots.</text>
</comment>
<comment type="induction">
    <text evidence="5">By salt stress.</text>
</comment>
<comment type="domain">
    <text>The Myb-extension domain (593-622) is critical for telomere binding.</text>
</comment>
<comment type="disruption phenotype">
    <text evidence="8">Viable, but deregulation of telomere length control.</text>
</comment>
<accession>Q9FFY9</accession>
<accession>O81375</accession>
<accession>Q0WUW8</accession>
<proteinExistence type="evidence at protein level"/>
<sequence>MVVKRKLNCGGSNGFDFPNIPKAPRSSRRKVSGKRSDDESEICAIDLLASLAGKLLEESESSSTSTYASEADNLDHLGGLIKQELEDGYTTKPCKSEFFDPGNPASKSTSENTSVTCLPFSSFENDCILEQTPVSDCKRASGLKSLVGSITEETCVVNEDAGSEQGANTFSLKDPSQLHSQSPESVLLDGDVKLAPCTDQVPNDSFKGYRNHSKLVCRDDDENYCKYYKFSDKCKSYRPLSRVGNRRIMQSVRAISKLKCFEDTRTDGRLKALYRKRKLCYGYNPWKRETIHRKRRLSDKGLVVNYDGGLSSESVSNSPEKGESENGDFSAAKIGLLSKDSRVKFSIKSLRIPELVIEVPETATVGLLKRTVKEAVTALLGGGIRIGVLVQGKKVRDDNNTLSQTGLSCRENLGNLGFTLEPGLETLPVPLCSETPVLSLPTDSTKLSERSAASPALETGIPLPPQDEDYLINLGNSVENNDELVPHLSDIPADEQPSSDSRALVPVLALESDALALVPVNEKPKRTELSQRRTRRPFSVTEVEALVSAVEEVGTGRWRDVKLRSFENASHRTYVDLKDKWKTLVHTASISPQQRRGEPVPQELLDRVLGAHRYWTQHQMKQNGKHQVATTMVVEAGSSM</sequence>
<protein>
    <recommendedName>
        <fullName>Telomere repeat-binding protein 4</fullName>
    </recommendedName>
    <alternativeName>
        <fullName>H-protein promoter binding factor-1</fullName>
        <shortName>AtTBP1</shortName>
    </alternativeName>
    <alternativeName>
        <fullName>Telomeric DNA-binding protein 1</fullName>
    </alternativeName>
</protein>
<reference key="1">
    <citation type="journal article" date="2001" name="FEBS Lett.">
        <title>Sequence-specific binding property of Arabidopsis thaliana telomeric DNA binding protein 1 (AtTBP1).</title>
        <authorList>
            <person name="Hwang M.G."/>
            <person name="Chung I.K."/>
            <person name="Kang B.G."/>
            <person name="Cho M.H."/>
        </authorList>
    </citation>
    <scope>NUCLEOTIDE SEQUENCE [MRNA]</scope>
    <scope>FUNCTION</scope>
    <scope>DNA-BINDING</scope>
    <scope>SUBUNIT</scope>
    <scope>TISSUE SPECIFICITY</scope>
</reference>
<reference key="2">
    <citation type="submission" date="1998-06" db="EMBL/GenBank/DDBJ databases">
        <title>Identification of an unusual Myb-type transcription factor that is involved in the light-dependent expression of the H-protein of glycine decarboxylase.</title>
        <authorList>
            <person name="Abbaraju H.K.R."/>
            <person name="Behal R.H."/>
            <person name="Oliver D.J."/>
        </authorList>
    </citation>
    <scope>NUCLEOTIDE SEQUENCE [MRNA]</scope>
</reference>
<reference key="3">
    <citation type="journal article" date="1997" name="DNA Res.">
        <title>Structural analysis of Arabidopsis thaliana chromosome 5. I. Sequence features of the 1.6 Mb regions covered by twenty physically assigned P1 clones.</title>
        <authorList>
            <person name="Sato S."/>
            <person name="Kotani H."/>
            <person name="Nakamura Y."/>
            <person name="Kaneko T."/>
            <person name="Asamizu E."/>
            <person name="Fukami M."/>
            <person name="Miyajima N."/>
            <person name="Tabata S."/>
        </authorList>
    </citation>
    <scope>NUCLEOTIDE SEQUENCE [LARGE SCALE GENOMIC DNA]</scope>
    <source>
        <strain>cv. Columbia</strain>
    </source>
</reference>
<reference key="4">
    <citation type="journal article" date="2017" name="Plant J.">
        <title>Araport11: a complete reannotation of the Arabidopsis thaliana reference genome.</title>
        <authorList>
            <person name="Cheng C.Y."/>
            <person name="Krishnakumar V."/>
            <person name="Chan A.P."/>
            <person name="Thibaud-Nissen F."/>
            <person name="Schobel S."/>
            <person name="Town C.D."/>
        </authorList>
    </citation>
    <scope>GENOME REANNOTATION</scope>
    <source>
        <strain>cv. Columbia</strain>
    </source>
</reference>
<reference key="5">
    <citation type="submission" date="2006-07" db="EMBL/GenBank/DDBJ databases">
        <title>Large-scale analysis of RIKEN Arabidopsis full-length (RAFL) cDNAs.</title>
        <authorList>
            <person name="Totoki Y."/>
            <person name="Seki M."/>
            <person name="Ishida J."/>
            <person name="Nakajima M."/>
            <person name="Enju A."/>
            <person name="Kamiya A."/>
            <person name="Narusaka M."/>
            <person name="Shin-i T."/>
            <person name="Nakagawa M."/>
            <person name="Sakamoto N."/>
            <person name="Oishi K."/>
            <person name="Kohara Y."/>
            <person name="Kobayashi M."/>
            <person name="Toyoda A."/>
            <person name="Sakaki Y."/>
            <person name="Sakurai T."/>
            <person name="Iida K."/>
            <person name="Akiyama K."/>
            <person name="Satou M."/>
            <person name="Toyoda T."/>
            <person name="Konagaya A."/>
            <person name="Carninci P."/>
            <person name="Kawai J."/>
            <person name="Hayashizaki Y."/>
            <person name="Shinozaki K."/>
        </authorList>
    </citation>
    <scope>NUCLEOTIDE SEQUENCE [LARGE SCALE MRNA]</scope>
    <source>
        <strain>cv. Columbia</strain>
    </source>
</reference>
<reference key="6">
    <citation type="submission" date="2008-10" db="EMBL/GenBank/DDBJ databases">
        <title>Arabidopsis ORF clones.</title>
        <authorList>
            <person name="de los Reyes C."/>
            <person name="Quan R."/>
            <person name="Chen H."/>
            <person name="Bautista V."/>
            <person name="Kim C.J."/>
            <person name="Ecker J.R."/>
        </authorList>
    </citation>
    <scope>NUCLEOTIDE SEQUENCE [LARGE SCALE MRNA]</scope>
</reference>
<reference key="7">
    <citation type="journal article" date="2003" name="J. Exp. Bot.">
        <title>Salt tolerance-related protein STO binds to a Myb transcription factor homologue and confers salt tolerance in Arabidopsis.</title>
        <authorList>
            <person name="Nagaoka S."/>
            <person name="Takano T."/>
        </authorList>
    </citation>
    <scope>SUBCELLULAR LOCATION</scope>
    <scope>INDUCTION</scope>
    <scope>INTERACTION WITH STO</scope>
</reference>
<reference key="8">
    <citation type="journal article" date="2004" name="J. Biol. Chem.">
        <title>A C-terminal Myb extension domain defines a novel family of double-strand telomeric DNA-binding proteins in Arabidopsis.</title>
        <authorList>
            <person name="Karamysheva Z.N."/>
            <person name="Surovtseva Y.V."/>
            <person name="Vespa L."/>
            <person name="Shakirov E.V."/>
            <person name="Shippen D.E."/>
        </authorList>
    </citation>
    <scope>GENE FAMILY</scope>
    <scope>TISSUE SPECIFICITY</scope>
</reference>
<reference key="9">
    <citation type="journal article" date="2005" name="Mol. Genet. Genomics">
        <title>AtTBP2 and AtTRP2 in Arabidopsis encode proteins that bind plant telomeric DNA and induce DNA bending in vitro.</title>
        <authorList>
            <person name="Hwang M.G."/>
            <person name="Kim K."/>
            <person name="Lee W.K."/>
            <person name="Cho M.H."/>
        </authorList>
    </citation>
    <scope>DNA-BINDING</scope>
    <scope>TISSUE SPECIFICITY</scope>
</reference>
<reference key="10">
    <citation type="journal article" date="2007" name="Nucleic Acids Res.">
        <title>Arabidopsis thaliana telomeric DNA-binding protein 1 is required for telomere length homeostasis and its Myb-extension domain stabilizes plant telomeric DNA binding.</title>
        <authorList>
            <person name="Hwang M.G."/>
            <person name="Cho M.H."/>
        </authorList>
    </citation>
    <scope>FUNCTION</scope>
    <scope>MUTAGENESIS OF ARG-607</scope>
    <scope>SUBCELLULAR LOCATION</scope>
    <scope>DISRUPTION PHENOTYPE</scope>
</reference>
<reference key="11">
    <citation type="journal article" date="2010" name="J. Mol. Biol.">
        <title>PAH-domain-specific interactions of the Arabidopsis transcription coregulator SIN3-LIKE1 (SNL1) with telomere-binding protein 1 and ALWAYS EARLY2 Myb-DNA binding factors.</title>
        <authorList>
            <person name="Bowen A.J."/>
            <person name="Gonzalez D."/>
            <person name="Mullins J.G."/>
            <person name="Bhatt A.M."/>
            <person name="Martinez A."/>
            <person name="Conlan R.S."/>
        </authorList>
    </citation>
    <scope>INTERACTION WITH SNL1</scope>
</reference>
<keyword id="KW-0238">DNA-binding</keyword>
<keyword id="KW-0539">Nucleus</keyword>
<keyword id="KW-1185">Reference proteome</keyword>
<keyword id="KW-0804">Transcription</keyword>
<keyword id="KW-0805">Transcription regulation</keyword>
<gene>
    <name type="primary">TRP4</name>
    <name type="synonym">HPPBF-1</name>
    <name type="synonym">TBP1</name>
    <name type="ordered locus">At5g13820</name>
    <name type="ORF">MAC12.23</name>
</gene>
<evidence type="ECO:0000255" key="1">
    <source>
        <dbReference type="PROSITE-ProRule" id="PRU00214"/>
    </source>
</evidence>
<evidence type="ECO:0000255" key="2">
    <source>
        <dbReference type="PROSITE-ProRule" id="PRU00625"/>
    </source>
</evidence>
<evidence type="ECO:0000256" key="3">
    <source>
        <dbReference type="SAM" id="MobiDB-lite"/>
    </source>
</evidence>
<evidence type="ECO:0000269" key="4">
    <source>
    </source>
</evidence>
<evidence type="ECO:0000269" key="5">
    <source>
    </source>
</evidence>
<evidence type="ECO:0000269" key="6">
    <source>
    </source>
</evidence>
<evidence type="ECO:0000269" key="7">
    <source>
    </source>
</evidence>
<evidence type="ECO:0000269" key="8">
    <source>
    </source>
</evidence>
<evidence type="ECO:0000269" key="9">
    <source>
    </source>
</evidence>
<evidence type="ECO:0000305" key="10"/>
<organism>
    <name type="scientific">Arabidopsis thaliana</name>
    <name type="common">Mouse-ear cress</name>
    <dbReference type="NCBI Taxonomy" id="3702"/>
    <lineage>
        <taxon>Eukaryota</taxon>
        <taxon>Viridiplantae</taxon>
        <taxon>Streptophyta</taxon>
        <taxon>Embryophyta</taxon>
        <taxon>Tracheophyta</taxon>
        <taxon>Spermatophyta</taxon>
        <taxon>Magnoliopsida</taxon>
        <taxon>eudicotyledons</taxon>
        <taxon>Gunneridae</taxon>
        <taxon>Pentapetalae</taxon>
        <taxon>rosids</taxon>
        <taxon>malvids</taxon>
        <taxon>Brassicales</taxon>
        <taxon>Brassicaceae</taxon>
        <taxon>Camelineae</taxon>
        <taxon>Arabidopsis</taxon>
    </lineage>
</organism>